<accession>P38493</accession>
<name>KCY_BACSU</name>
<dbReference type="EC" id="2.7.4.25"/>
<dbReference type="EMBL" id="U11687">
    <property type="protein sequence ID" value="AAA85149.1"/>
    <property type="molecule type" value="Genomic_DNA"/>
</dbReference>
<dbReference type="EMBL" id="L47648">
    <property type="protein sequence ID" value="AAC83961.1"/>
    <property type="molecule type" value="Genomic_DNA"/>
</dbReference>
<dbReference type="EMBL" id="AL009126">
    <property type="protein sequence ID" value="CAB14205.1"/>
    <property type="molecule type" value="Genomic_DNA"/>
</dbReference>
<dbReference type="PIR" id="F69601">
    <property type="entry name" value="F69601"/>
</dbReference>
<dbReference type="RefSeq" id="NP_390170.1">
    <property type="nucleotide sequence ID" value="NC_000964.3"/>
</dbReference>
<dbReference type="RefSeq" id="WP_003230555.1">
    <property type="nucleotide sequence ID" value="NZ_OZ025638.1"/>
</dbReference>
<dbReference type="SMR" id="P38493"/>
<dbReference type="FunCoup" id="P38493">
    <property type="interactions" value="332"/>
</dbReference>
<dbReference type="STRING" id="224308.BSU22890"/>
<dbReference type="jPOST" id="P38493"/>
<dbReference type="PaxDb" id="224308-BSU22890"/>
<dbReference type="EnsemblBacteria" id="CAB14205">
    <property type="protein sequence ID" value="CAB14205"/>
    <property type="gene ID" value="BSU_22890"/>
</dbReference>
<dbReference type="GeneID" id="938982"/>
<dbReference type="KEGG" id="bsu:BSU22890"/>
<dbReference type="eggNOG" id="COG0283">
    <property type="taxonomic scope" value="Bacteria"/>
</dbReference>
<dbReference type="InParanoid" id="P38493"/>
<dbReference type="OrthoDB" id="9807434at2"/>
<dbReference type="PhylomeDB" id="P38493"/>
<dbReference type="BioCyc" id="BSUB:BSU22890-MONOMER"/>
<dbReference type="Proteomes" id="UP000001570">
    <property type="component" value="Chromosome"/>
</dbReference>
<dbReference type="GO" id="GO:0005829">
    <property type="term" value="C:cytosol"/>
    <property type="evidence" value="ECO:0000318"/>
    <property type="project" value="GO_Central"/>
</dbReference>
<dbReference type="GO" id="GO:0004127">
    <property type="term" value="F:(d)CMP kinase activity"/>
    <property type="evidence" value="ECO:0000318"/>
    <property type="project" value="GO_Central"/>
</dbReference>
<dbReference type="GO" id="GO:0005524">
    <property type="term" value="F:ATP binding"/>
    <property type="evidence" value="ECO:0007669"/>
    <property type="project" value="UniProtKB-UniRule"/>
</dbReference>
<dbReference type="GO" id="GO:0036430">
    <property type="term" value="F:CMP kinase activity"/>
    <property type="evidence" value="ECO:0007669"/>
    <property type="project" value="RHEA"/>
</dbReference>
<dbReference type="GO" id="GO:0036431">
    <property type="term" value="F:dCMP kinase activity"/>
    <property type="evidence" value="ECO:0007669"/>
    <property type="project" value="RHEA"/>
</dbReference>
<dbReference type="GO" id="GO:0015949">
    <property type="term" value="P:nucleobase-containing small molecule interconversion"/>
    <property type="evidence" value="ECO:0000318"/>
    <property type="project" value="GO_Central"/>
</dbReference>
<dbReference type="GO" id="GO:0006220">
    <property type="term" value="P:pyrimidine nucleotide metabolic process"/>
    <property type="evidence" value="ECO:0007669"/>
    <property type="project" value="UniProtKB-UniRule"/>
</dbReference>
<dbReference type="CDD" id="cd02020">
    <property type="entry name" value="CMPK"/>
    <property type="match status" value="1"/>
</dbReference>
<dbReference type="FunFam" id="3.40.50.300:FF:000484">
    <property type="entry name" value="Cytidylate kinase"/>
    <property type="match status" value="1"/>
</dbReference>
<dbReference type="Gene3D" id="3.40.50.300">
    <property type="entry name" value="P-loop containing nucleotide triphosphate hydrolases"/>
    <property type="match status" value="1"/>
</dbReference>
<dbReference type="HAMAP" id="MF_00238">
    <property type="entry name" value="Cytidyl_kinase_type1"/>
    <property type="match status" value="1"/>
</dbReference>
<dbReference type="InterPro" id="IPR003136">
    <property type="entry name" value="Cytidylate_kin"/>
</dbReference>
<dbReference type="InterPro" id="IPR011994">
    <property type="entry name" value="Cytidylate_kinase_dom"/>
</dbReference>
<dbReference type="InterPro" id="IPR027417">
    <property type="entry name" value="P-loop_NTPase"/>
</dbReference>
<dbReference type="NCBIfam" id="TIGR00017">
    <property type="entry name" value="cmk"/>
    <property type="match status" value="1"/>
</dbReference>
<dbReference type="PANTHER" id="PTHR21299:SF2">
    <property type="entry name" value="CYTIDYLATE KINASE"/>
    <property type="match status" value="1"/>
</dbReference>
<dbReference type="PANTHER" id="PTHR21299">
    <property type="entry name" value="CYTIDYLATE KINASE/PANTOATE-BETA-ALANINE LIGASE"/>
    <property type="match status" value="1"/>
</dbReference>
<dbReference type="Pfam" id="PF02224">
    <property type="entry name" value="Cytidylate_kin"/>
    <property type="match status" value="1"/>
</dbReference>
<dbReference type="SUPFAM" id="SSF52540">
    <property type="entry name" value="P-loop containing nucleoside triphosphate hydrolases"/>
    <property type="match status" value="1"/>
</dbReference>
<feature type="chain" id="PRO_0000131880" description="Cytidylate kinase">
    <location>
        <begin position="1"/>
        <end position="224"/>
    </location>
</feature>
<feature type="binding site" evidence="1">
    <location>
        <begin position="11"/>
        <end position="19"/>
    </location>
    <ligand>
        <name>ATP</name>
        <dbReference type="ChEBI" id="CHEBI:30616"/>
    </ligand>
</feature>
<gene>
    <name type="primary">cmk</name>
    <name evidence="3" type="synonym">jofC</name>
    <name type="synonym">ypfC</name>
    <name type="ordered locus">BSU22890</name>
</gene>
<sequence length="224" mass="25096">MEKKLSIAIDGPAAAGKSTVAKIVAEKKSYIYIDTGAMYRAITYAALQENVDLTDEEKLAELLKRTDIELITTKDGQKVFVNGTDVTEAIRTDEISNQVSIAAKHRSVREEMVKRQQQLGEKGGVVMDGRDIGTHVLPNAEVKIFLLASVEERAKRRYEENVKKGFDVNYETLIEEIARRDKLDSEREVSPLRKAEDALEIDTTSLSIQEVADKILEAVEQKSR</sequence>
<proteinExistence type="evidence at protein level"/>
<evidence type="ECO:0000250" key="1"/>
<evidence type="ECO:0000269" key="2">
    <source>
    </source>
</evidence>
<evidence type="ECO:0000303" key="3">
    <source>
    </source>
</evidence>
<evidence type="ECO:0000305" key="4"/>
<comment type="catalytic activity">
    <reaction>
        <text>CMP + ATP = CDP + ADP</text>
        <dbReference type="Rhea" id="RHEA:11600"/>
        <dbReference type="ChEBI" id="CHEBI:30616"/>
        <dbReference type="ChEBI" id="CHEBI:58069"/>
        <dbReference type="ChEBI" id="CHEBI:60377"/>
        <dbReference type="ChEBI" id="CHEBI:456216"/>
        <dbReference type="EC" id="2.7.4.25"/>
    </reaction>
</comment>
<comment type="catalytic activity">
    <reaction>
        <text>dCMP + ATP = dCDP + ADP</text>
        <dbReference type="Rhea" id="RHEA:25094"/>
        <dbReference type="ChEBI" id="CHEBI:30616"/>
        <dbReference type="ChEBI" id="CHEBI:57566"/>
        <dbReference type="ChEBI" id="CHEBI:58593"/>
        <dbReference type="ChEBI" id="CHEBI:456216"/>
        <dbReference type="EC" id="2.7.4.25"/>
    </reaction>
</comment>
<comment type="subcellular location">
    <subcellularLocation>
        <location evidence="1">Cytoplasm</location>
    </subcellularLocation>
</comment>
<comment type="induction">
    <text evidence="2">Transcribed during sporulation. May not be transcribed with the downstream gene (a ribosomal protein bS1 homolog), there is a probable transcription terminator between the 2 genes.</text>
</comment>
<comment type="disruption phenotype">
    <text evidence="2">Essential, it cannot be disrupted.</text>
</comment>
<comment type="similarity">
    <text evidence="4">Belongs to the cytidylate kinase family. Type 1 subfamily.</text>
</comment>
<protein>
    <recommendedName>
        <fullName>Cytidylate kinase</fullName>
        <shortName>CK</shortName>
        <ecNumber>2.7.4.25</ecNumber>
    </recommendedName>
    <alternativeName>
        <fullName>Cytidine monophosphate kinase</fullName>
        <shortName>CMP kinase</shortName>
    </alternativeName>
</protein>
<reference key="1">
    <citation type="journal article" date="1995" name="Microbiology">
        <title>The Bacillus subtilis chromosome region encoding homologues of the Escherichia coli mssA and rpsA gene products.</title>
        <authorList>
            <person name="Sorokin A.V."/>
            <person name="Serror P."/>
            <person name="Pujic P."/>
            <person name="Azevedo V."/>
            <person name="Ehrlich S.D."/>
        </authorList>
    </citation>
    <scope>NUCLEOTIDE SEQUENCE [GENOMIC DNA]</scope>
    <scope>INDUCTION</scope>
    <scope>DISRUPTION PHENOTYPE</scope>
    <source>
        <strain>168 / Marburg / ATCC 6051 / DSM 10 / JCM 1465 / NBRC 13719 / NCIMB 3610 / NRRL NRS-744 / VKM B-501</strain>
    </source>
</reference>
<reference key="2">
    <citation type="journal article" date="1997" name="Nature">
        <title>The complete genome sequence of the Gram-positive bacterium Bacillus subtilis.</title>
        <authorList>
            <person name="Kunst F."/>
            <person name="Ogasawara N."/>
            <person name="Moszer I."/>
            <person name="Albertini A.M."/>
            <person name="Alloni G."/>
            <person name="Azevedo V."/>
            <person name="Bertero M.G."/>
            <person name="Bessieres P."/>
            <person name="Bolotin A."/>
            <person name="Borchert S."/>
            <person name="Borriss R."/>
            <person name="Boursier L."/>
            <person name="Brans A."/>
            <person name="Braun M."/>
            <person name="Brignell S.C."/>
            <person name="Bron S."/>
            <person name="Brouillet S."/>
            <person name="Bruschi C.V."/>
            <person name="Caldwell B."/>
            <person name="Capuano V."/>
            <person name="Carter N.M."/>
            <person name="Choi S.-K."/>
            <person name="Codani J.-J."/>
            <person name="Connerton I.F."/>
            <person name="Cummings N.J."/>
            <person name="Daniel R.A."/>
            <person name="Denizot F."/>
            <person name="Devine K.M."/>
            <person name="Duesterhoeft A."/>
            <person name="Ehrlich S.D."/>
            <person name="Emmerson P.T."/>
            <person name="Entian K.-D."/>
            <person name="Errington J."/>
            <person name="Fabret C."/>
            <person name="Ferrari E."/>
            <person name="Foulger D."/>
            <person name="Fritz C."/>
            <person name="Fujita M."/>
            <person name="Fujita Y."/>
            <person name="Fuma S."/>
            <person name="Galizzi A."/>
            <person name="Galleron N."/>
            <person name="Ghim S.-Y."/>
            <person name="Glaser P."/>
            <person name="Goffeau A."/>
            <person name="Golightly E.J."/>
            <person name="Grandi G."/>
            <person name="Guiseppi G."/>
            <person name="Guy B.J."/>
            <person name="Haga K."/>
            <person name="Haiech J."/>
            <person name="Harwood C.R."/>
            <person name="Henaut A."/>
            <person name="Hilbert H."/>
            <person name="Holsappel S."/>
            <person name="Hosono S."/>
            <person name="Hullo M.-F."/>
            <person name="Itaya M."/>
            <person name="Jones L.-M."/>
            <person name="Joris B."/>
            <person name="Karamata D."/>
            <person name="Kasahara Y."/>
            <person name="Klaerr-Blanchard M."/>
            <person name="Klein C."/>
            <person name="Kobayashi Y."/>
            <person name="Koetter P."/>
            <person name="Koningstein G."/>
            <person name="Krogh S."/>
            <person name="Kumano M."/>
            <person name="Kurita K."/>
            <person name="Lapidus A."/>
            <person name="Lardinois S."/>
            <person name="Lauber J."/>
            <person name="Lazarevic V."/>
            <person name="Lee S.-M."/>
            <person name="Levine A."/>
            <person name="Liu H."/>
            <person name="Masuda S."/>
            <person name="Mauel C."/>
            <person name="Medigue C."/>
            <person name="Medina N."/>
            <person name="Mellado R.P."/>
            <person name="Mizuno M."/>
            <person name="Moestl D."/>
            <person name="Nakai S."/>
            <person name="Noback M."/>
            <person name="Noone D."/>
            <person name="O'Reilly M."/>
            <person name="Ogawa K."/>
            <person name="Ogiwara A."/>
            <person name="Oudega B."/>
            <person name="Park S.-H."/>
            <person name="Parro V."/>
            <person name="Pohl T.M."/>
            <person name="Portetelle D."/>
            <person name="Porwollik S."/>
            <person name="Prescott A.M."/>
            <person name="Presecan E."/>
            <person name="Pujic P."/>
            <person name="Purnelle B."/>
            <person name="Rapoport G."/>
            <person name="Rey M."/>
            <person name="Reynolds S."/>
            <person name="Rieger M."/>
            <person name="Rivolta C."/>
            <person name="Rocha E."/>
            <person name="Roche B."/>
            <person name="Rose M."/>
            <person name="Sadaie Y."/>
            <person name="Sato T."/>
            <person name="Scanlan E."/>
            <person name="Schleich S."/>
            <person name="Schroeter R."/>
            <person name="Scoffone F."/>
            <person name="Sekiguchi J."/>
            <person name="Sekowska A."/>
            <person name="Seror S.J."/>
            <person name="Serror P."/>
            <person name="Shin B.-S."/>
            <person name="Soldo B."/>
            <person name="Sorokin A."/>
            <person name="Tacconi E."/>
            <person name="Takagi T."/>
            <person name="Takahashi H."/>
            <person name="Takemaru K."/>
            <person name="Takeuchi M."/>
            <person name="Tamakoshi A."/>
            <person name="Tanaka T."/>
            <person name="Terpstra P."/>
            <person name="Tognoni A."/>
            <person name="Tosato V."/>
            <person name="Uchiyama S."/>
            <person name="Vandenbol M."/>
            <person name="Vannier F."/>
            <person name="Vassarotti A."/>
            <person name="Viari A."/>
            <person name="Wambutt R."/>
            <person name="Wedler E."/>
            <person name="Wedler H."/>
            <person name="Weitzenegger T."/>
            <person name="Winters P."/>
            <person name="Wipat A."/>
            <person name="Yamamoto H."/>
            <person name="Yamane K."/>
            <person name="Yasumoto K."/>
            <person name="Yata K."/>
            <person name="Yoshida K."/>
            <person name="Yoshikawa H.-F."/>
            <person name="Zumstein E."/>
            <person name="Yoshikawa H."/>
            <person name="Danchin A."/>
        </authorList>
    </citation>
    <scope>NUCLEOTIDE SEQUENCE [LARGE SCALE GENOMIC DNA]</scope>
    <source>
        <strain>168</strain>
    </source>
</reference>
<reference key="3">
    <citation type="journal article" date="1997" name="Arch. Biochem. Biophys.">
        <title>Structural and catalytic properties of CMP kinase from Bacillus subtilis: a comparative analysis with the homologous enzyme from Escherichia coli.</title>
        <authorList>
            <person name="Schultz C.P."/>
            <person name="Ylisastigui-Pons L."/>
            <person name="Serina L."/>
            <person name="Sakamoto H."/>
            <person name="Mantsch H.H."/>
            <person name="Neuhard J."/>
            <person name="Barzu O."/>
            <person name="Gilles A.M."/>
        </authorList>
    </citation>
    <scope>CHARACTERIZATION</scope>
</reference>
<organism>
    <name type="scientific">Bacillus subtilis (strain 168)</name>
    <dbReference type="NCBI Taxonomy" id="224308"/>
    <lineage>
        <taxon>Bacteria</taxon>
        <taxon>Bacillati</taxon>
        <taxon>Bacillota</taxon>
        <taxon>Bacilli</taxon>
        <taxon>Bacillales</taxon>
        <taxon>Bacillaceae</taxon>
        <taxon>Bacillus</taxon>
    </lineage>
</organism>
<keyword id="KW-0067">ATP-binding</keyword>
<keyword id="KW-0963">Cytoplasm</keyword>
<keyword id="KW-0418">Kinase</keyword>
<keyword id="KW-0547">Nucleotide-binding</keyword>
<keyword id="KW-1185">Reference proteome</keyword>
<keyword id="KW-0808">Transferase</keyword>